<protein>
    <recommendedName>
        <fullName>Balbiani ring protein 1</fullName>
    </recommendedName>
    <alternativeName>
        <fullName>Giant secretory protein I-A</fullName>
        <shortName>GSP-IA</shortName>
    </alternativeName>
</protein>
<name>BAR1_CHITE</name>
<proteinExistence type="evidence at transcript level"/>
<keyword id="KW-0677">Repeat</keyword>
<keyword id="KW-0964">Secreted</keyword>
<gene>
    <name type="primary">BR1</name>
</gene>
<reference key="1">
    <citation type="journal article" date="1983" name="J. Biol. Chem.">
        <title>Repeated nucleotide sequence arrays in Balbiani ring 1 of Chironomus tentans contain internally nonrepeating and subrepeating elements.</title>
        <authorList>
            <person name="Case S.T."/>
            <person name="Byers M.R."/>
        </authorList>
    </citation>
    <scope>NUCLEOTIDE SEQUENCE [GENOMIC DNA] OF 1-116 (CLONE PCTBR1-1)</scope>
    <source>
        <tissue>Salivary gland</tissue>
    </source>
</reference>
<reference key="2">
    <citation type="journal article" date="1982" name="Proc. Natl. Acad. Sci. U.S.A.">
        <title>Evidence for a common ancestor sequence for the Balbiani ring 1 and Balbiani ring 2 genes in Chironomus tentans.</title>
        <authorList>
            <person name="Wieslander L."/>
            <person name="Sumegi J."/>
            <person name="Daneholt B."/>
        </authorList>
    </citation>
    <scope>NUCLEOTIDE SEQUENCE [MRNA] OF 7-174 (CLONE PCT21)</scope>
    <source>
        <tissue>Salivary gland</tissue>
    </source>
</reference>
<comment type="function">
    <text>Used by the larvae to construct a supramolecular structure, the larval tube.</text>
</comment>
<comment type="subcellular location">
    <subcellularLocation>
        <location>Secreted</location>
    </subcellularLocation>
</comment>
<comment type="tissue specificity">
    <text>Salivary gland.</text>
</comment>
<sequence length="174" mass="18920">RPERCGSAMRKAEAEKCARRNGRFNASKCRCTSAGKPSRNSEPSKGSKPRPEKPSKGSKPRPEKPSKGSKPKPEKPSKGSKPRPERCGSAMRKAEAEKCARRNGRFNASKCRCTSAGKPSRKSEPSKGSKPRPEKPSKESKPRPEKPSKGSKPRPEKPSKGSKPRPEGCGSAMR</sequence>
<accession>P02849</accession>
<dbReference type="EMBL" id="K00447">
    <property type="protein sequence ID" value="AAA28238.1"/>
    <property type="molecule type" value="Genomic_DNA"/>
</dbReference>
<dbReference type="EMBL" id="J01055">
    <property type="protein sequence ID" value="AAA28236.1"/>
    <property type="molecule type" value="mRNA"/>
</dbReference>
<dbReference type="PIR" id="A92428">
    <property type="entry name" value="BQIC1T"/>
</dbReference>
<dbReference type="GO" id="GO:0005576">
    <property type="term" value="C:extracellular region"/>
    <property type="evidence" value="ECO:0007669"/>
    <property type="project" value="UniProtKB-SubCell"/>
</dbReference>
<feature type="chain" id="PRO_0000064823" description="Balbiani ring protein 1">
    <location>
        <begin position="1" status="less than"/>
        <end position="174" status="greater than"/>
    </location>
</feature>
<feature type="repeat" description="1-1">
    <location>
        <begin position="42"/>
        <end position="52"/>
    </location>
</feature>
<feature type="repeat" description="1-2">
    <location>
        <begin position="53"/>
        <end position="63"/>
    </location>
</feature>
<feature type="repeat" description="1-3">
    <location>
        <begin position="64"/>
        <end position="74"/>
    </location>
</feature>
<feature type="repeat" description="1-4">
    <location>
        <begin position="75"/>
        <end position="85"/>
    </location>
</feature>
<feature type="repeat" description="2-1">
    <location>
        <begin position="124"/>
        <end position="134"/>
    </location>
</feature>
<feature type="repeat" description="2-2">
    <location>
        <begin position="135"/>
        <end position="145"/>
    </location>
</feature>
<feature type="repeat" description="2-3">
    <location>
        <begin position="146"/>
        <end position="156"/>
    </location>
</feature>
<feature type="repeat" description="2-4">
    <location>
        <begin position="157"/>
        <end position="167"/>
    </location>
</feature>
<feature type="region of interest" description="Disordered" evidence="1">
    <location>
        <begin position="28"/>
        <end position="174"/>
    </location>
</feature>
<feature type="region of interest" description="4 X 11 AA tandem repeats">
    <location>
        <begin position="42"/>
        <end position="85"/>
    </location>
</feature>
<feature type="region of interest" description="4 X 11 AA tandem repeats">
    <location>
        <begin position="124"/>
        <end position="167"/>
    </location>
</feature>
<feature type="compositionally biased region" description="Basic and acidic residues" evidence="1">
    <location>
        <begin position="49"/>
        <end position="100"/>
    </location>
</feature>
<feature type="compositionally biased region" description="Basic and acidic residues" evidence="1">
    <location>
        <begin position="121"/>
        <end position="159"/>
    </location>
</feature>
<feature type="sequence variant" description="In clone PCT21.">
    <original>N</original>
    <variation>K</variation>
    <location>
        <position position="40"/>
    </location>
</feature>
<feature type="sequence variant" description="In clone PCT21.">
    <original>G</original>
    <variation>E</variation>
    <location>
        <position position="57"/>
    </location>
</feature>
<feature type="sequence variant" description="In clone PCT21.">
    <original>K</original>
    <variation>R</variation>
    <location>
        <position position="72"/>
    </location>
</feature>
<feature type="sequence variant" description="In clone PCT21.">
    <original>R</original>
    <variation>G</variation>
    <location>
        <position position="86"/>
    </location>
</feature>
<feature type="non-terminal residue">
    <location>
        <position position="1"/>
    </location>
</feature>
<feature type="non-terminal residue">
    <location>
        <position position="174"/>
    </location>
</feature>
<organism>
    <name type="scientific">Chironomus tentans</name>
    <name type="common">Midge</name>
    <name type="synonym">Camptochironomus tentans</name>
    <dbReference type="NCBI Taxonomy" id="7153"/>
    <lineage>
        <taxon>Eukaryota</taxon>
        <taxon>Metazoa</taxon>
        <taxon>Ecdysozoa</taxon>
        <taxon>Arthropoda</taxon>
        <taxon>Hexapoda</taxon>
        <taxon>Insecta</taxon>
        <taxon>Pterygota</taxon>
        <taxon>Neoptera</taxon>
        <taxon>Endopterygota</taxon>
        <taxon>Diptera</taxon>
        <taxon>Nematocera</taxon>
        <taxon>Chironomoidea</taxon>
        <taxon>Chironomidae</taxon>
        <taxon>Chironominae</taxon>
        <taxon>Chironomus</taxon>
    </lineage>
</organism>
<evidence type="ECO:0000256" key="1">
    <source>
        <dbReference type="SAM" id="MobiDB-lite"/>
    </source>
</evidence>